<comment type="subcellular location">
    <subcellularLocation>
        <location evidence="2">Host nucleus</location>
    </subcellularLocation>
</comment>
<comment type="similarity">
    <text evidence="2">Belongs to the bZIP family. Fos subfamily.</text>
</comment>
<organismHost>
    <name type="scientific">Mus musculus</name>
    <name type="common">Mouse</name>
    <dbReference type="NCBI Taxonomy" id="10090"/>
</organismHost>
<sequence>MMFSGFNADYEASSFRCSSASPAGDSLSYYHSPADSFSSMGSPVNTQDFCADLSVSSANFIPTVTATSTSPDLQWLVQPTLVSSVAPSQTRAPHPYGLPTQSAGAYARAEMVKTVSGGRAQSIGRRGKVEQLSPEEEEKRRIRRERNKMAAAKCRNRRRELTDTLQAETDQLEDKKSALQTEIANLLKEKEKLEFILAAHRPACKIPDDLGFPEEMSVASLDLTGGLPEASTPESEEAFTLPLLNDPEPKPSLEPVKSISNVELKAEPFDDFLFPASSRPSGSETSRSVPNVDLSGSFYAADWEPLHSNSLGMGPMVTELEPLCTPVVTCTPLLRLPELTHAAGPVSSQRRQGSRHPDVPLPELVHYREEKHVFPQRFPST</sequence>
<accession>P01102</accession>
<name>FOS_MSVFB</name>
<dbReference type="EMBL" id="V01184">
    <property type="protein sequence ID" value="CAA24505.1"/>
    <property type="molecule type" value="Genomic_DNA"/>
</dbReference>
<dbReference type="PIR" id="A01344">
    <property type="entry name" value="TVMVJ"/>
</dbReference>
<dbReference type="SMR" id="P01102"/>
<dbReference type="GO" id="GO:0042025">
    <property type="term" value="C:host cell nucleus"/>
    <property type="evidence" value="ECO:0007669"/>
    <property type="project" value="UniProtKB-SubCell"/>
</dbReference>
<dbReference type="GO" id="GO:0000981">
    <property type="term" value="F:DNA-binding transcription factor activity, RNA polymerase II-specific"/>
    <property type="evidence" value="ECO:0007669"/>
    <property type="project" value="TreeGrafter"/>
</dbReference>
<dbReference type="GO" id="GO:0000978">
    <property type="term" value="F:RNA polymerase II cis-regulatory region sequence-specific DNA binding"/>
    <property type="evidence" value="ECO:0007669"/>
    <property type="project" value="TreeGrafter"/>
</dbReference>
<dbReference type="CDD" id="cd14721">
    <property type="entry name" value="bZIP_Fos"/>
    <property type="match status" value="1"/>
</dbReference>
<dbReference type="FunFam" id="1.20.5.170:FF:000006">
    <property type="entry name" value="fos-related antigen 2 isoform X1"/>
    <property type="match status" value="1"/>
</dbReference>
<dbReference type="Gene3D" id="1.20.5.170">
    <property type="match status" value="1"/>
</dbReference>
<dbReference type="InterPro" id="IPR000837">
    <property type="entry name" value="AP-1"/>
</dbReference>
<dbReference type="InterPro" id="IPR004827">
    <property type="entry name" value="bZIP"/>
</dbReference>
<dbReference type="InterPro" id="IPR046347">
    <property type="entry name" value="bZIP_sf"/>
</dbReference>
<dbReference type="PANTHER" id="PTHR23351">
    <property type="entry name" value="FOS TRANSCRIPTION FACTOR-RELATED"/>
    <property type="match status" value="1"/>
</dbReference>
<dbReference type="PANTHER" id="PTHR23351:SF4">
    <property type="entry name" value="PROTEIN C-FOS"/>
    <property type="match status" value="1"/>
</dbReference>
<dbReference type="Pfam" id="PF00170">
    <property type="entry name" value="bZIP_1"/>
    <property type="match status" value="1"/>
</dbReference>
<dbReference type="PRINTS" id="PR00042">
    <property type="entry name" value="LEUZIPPRFOS"/>
</dbReference>
<dbReference type="SMART" id="SM00338">
    <property type="entry name" value="BRLZ"/>
    <property type="match status" value="1"/>
</dbReference>
<dbReference type="SUPFAM" id="SSF57959">
    <property type="entry name" value="Leucine zipper domain"/>
    <property type="match status" value="1"/>
</dbReference>
<dbReference type="PROSITE" id="PS50217">
    <property type="entry name" value="BZIP"/>
    <property type="match status" value="1"/>
</dbReference>
<dbReference type="PROSITE" id="PS00036">
    <property type="entry name" value="BZIP_BASIC"/>
    <property type="match status" value="1"/>
</dbReference>
<organism>
    <name type="scientific">FBJ murine osteosarcoma virus</name>
    <name type="common">FBJ-MSV</name>
    <name type="synonym">Finkel-Biskis-Jinkins murine osteosarcoma virus</name>
    <dbReference type="NCBI Taxonomy" id="11805"/>
    <lineage>
        <taxon>Viruses</taxon>
        <taxon>Riboviria</taxon>
        <taxon>Pararnavirae</taxon>
        <taxon>Artverviricota</taxon>
        <taxon>Revtraviricetes</taxon>
        <taxon>Ortervirales</taxon>
        <taxon>Retroviridae</taxon>
        <taxon>Orthoretrovirinae</taxon>
        <taxon>Gammaretrovirus</taxon>
        <taxon>Moloney murine sarcoma virus</taxon>
    </lineage>
</organism>
<gene>
    <name type="primary">V-FOS</name>
</gene>
<reference key="1">
    <citation type="journal article" date="1983" name="Cell">
        <title>Analysis of FBJ-MuSV provirus and c-fos (mouse) gene reveals that viral and cellular fos gene products have different carboxy termini.</title>
        <authorList>
            <person name="van Beveren C."/>
            <person name="van Straaten F."/>
            <person name="Curran T."/>
            <person name="Mueller R."/>
            <person name="Verma I.M."/>
        </authorList>
    </citation>
    <scope>NUCLEOTIDE SEQUENCE [GENOMIC DNA]</scope>
</reference>
<keyword id="KW-0238">DNA-binding</keyword>
<keyword id="KW-1048">Host nucleus</keyword>
<keyword id="KW-0553">Oncogene</keyword>
<keyword id="KW-0597">Phosphoprotein</keyword>
<evidence type="ECO:0000255" key="1">
    <source>
        <dbReference type="PROSITE-ProRule" id="PRU00978"/>
    </source>
</evidence>
<evidence type="ECO:0000305" key="2"/>
<protein>
    <recommendedName>
        <fullName>p55-v-Fos-transforming protein</fullName>
    </recommendedName>
</protein>
<proteinExistence type="inferred from homology"/>
<feature type="chain" id="PRO_0000076460" description="p55-v-Fos-transforming protein">
    <location>
        <begin position="1"/>
        <end position="381"/>
    </location>
</feature>
<feature type="domain" description="bZIP" evidence="1">
    <location>
        <begin position="137"/>
        <end position="200"/>
    </location>
</feature>
<feature type="region of interest" description="Basic motif" evidence="1">
    <location>
        <begin position="139"/>
        <end position="159"/>
    </location>
</feature>
<feature type="region of interest" description="Leucine-zipper" evidence="1">
    <location>
        <begin position="165"/>
        <end position="193"/>
    </location>
</feature>